<protein>
    <recommendedName>
        <fullName evidence="1">Tryptophan synthase alpha chain</fullName>
        <ecNumber evidence="1">4.2.1.20</ecNumber>
    </recommendedName>
</protein>
<sequence length="266" mass="28306">MTAISDCFAALRSQGRCALIPFLTAGDPDLETTRQALLALDREGADLIELGVPYSDPLADGPVIQAAATRALQAGTRLDDVLALLKDVRSQIKAPIVLFTYCNPILNRGFEAFLDQIAAAGANGLVVPDLPLEESQRLSEVAAERGIDLILLIAPTSSADRIAAISKQARGFIYLVSVTGVTGMRQGMQSRVADLLQEIRQGTDKPIGVGFGISGAEQARQVRDWGADGVIVGSAFVNRLQEQGVEGVATLCRELRQAIDRQPVLS</sequence>
<organism>
    <name type="scientific">Synechococcus sp. (strain ATCC 27144 / PCC 6301 / SAUG 1402/1)</name>
    <name type="common">Anacystis nidulans</name>
    <dbReference type="NCBI Taxonomy" id="269084"/>
    <lineage>
        <taxon>Bacteria</taxon>
        <taxon>Bacillati</taxon>
        <taxon>Cyanobacteriota</taxon>
        <taxon>Cyanophyceae</taxon>
        <taxon>Synechococcales</taxon>
        <taxon>Synechococcaceae</taxon>
        <taxon>Synechococcus</taxon>
    </lineage>
</organism>
<proteinExistence type="inferred from homology"/>
<dbReference type="EC" id="4.2.1.20" evidence="1"/>
<dbReference type="EMBL" id="AP008231">
    <property type="protein sequence ID" value="BAD79296.1"/>
    <property type="molecule type" value="Genomic_DNA"/>
</dbReference>
<dbReference type="RefSeq" id="WP_011243417.1">
    <property type="nucleotide sequence ID" value="NZ_CP085785.1"/>
</dbReference>
<dbReference type="SMR" id="Q5N324"/>
<dbReference type="GeneID" id="72429231"/>
<dbReference type="KEGG" id="syc:syc1106_d"/>
<dbReference type="eggNOG" id="COG0159">
    <property type="taxonomic scope" value="Bacteria"/>
</dbReference>
<dbReference type="UniPathway" id="UPA00035">
    <property type="reaction ID" value="UER00044"/>
</dbReference>
<dbReference type="Proteomes" id="UP000001175">
    <property type="component" value="Chromosome"/>
</dbReference>
<dbReference type="GO" id="GO:0005829">
    <property type="term" value="C:cytosol"/>
    <property type="evidence" value="ECO:0007669"/>
    <property type="project" value="TreeGrafter"/>
</dbReference>
<dbReference type="GO" id="GO:0004834">
    <property type="term" value="F:tryptophan synthase activity"/>
    <property type="evidence" value="ECO:0007669"/>
    <property type="project" value="UniProtKB-UniRule"/>
</dbReference>
<dbReference type="CDD" id="cd04724">
    <property type="entry name" value="Tryptophan_synthase_alpha"/>
    <property type="match status" value="1"/>
</dbReference>
<dbReference type="FunFam" id="3.20.20.70:FF:000037">
    <property type="entry name" value="Tryptophan synthase alpha chain"/>
    <property type="match status" value="1"/>
</dbReference>
<dbReference type="Gene3D" id="3.20.20.70">
    <property type="entry name" value="Aldolase class I"/>
    <property type="match status" value="1"/>
</dbReference>
<dbReference type="HAMAP" id="MF_00131">
    <property type="entry name" value="Trp_synth_alpha"/>
    <property type="match status" value="1"/>
</dbReference>
<dbReference type="InterPro" id="IPR013785">
    <property type="entry name" value="Aldolase_TIM"/>
</dbReference>
<dbReference type="InterPro" id="IPR011060">
    <property type="entry name" value="RibuloseP-bd_barrel"/>
</dbReference>
<dbReference type="InterPro" id="IPR018204">
    <property type="entry name" value="Trp_synthase_alpha_AS"/>
</dbReference>
<dbReference type="InterPro" id="IPR002028">
    <property type="entry name" value="Trp_synthase_suA"/>
</dbReference>
<dbReference type="NCBIfam" id="TIGR00262">
    <property type="entry name" value="trpA"/>
    <property type="match status" value="1"/>
</dbReference>
<dbReference type="PANTHER" id="PTHR43406:SF1">
    <property type="entry name" value="TRYPTOPHAN SYNTHASE ALPHA CHAIN, CHLOROPLASTIC"/>
    <property type="match status" value="1"/>
</dbReference>
<dbReference type="PANTHER" id="PTHR43406">
    <property type="entry name" value="TRYPTOPHAN SYNTHASE, ALPHA CHAIN"/>
    <property type="match status" value="1"/>
</dbReference>
<dbReference type="Pfam" id="PF00290">
    <property type="entry name" value="Trp_syntA"/>
    <property type="match status" value="1"/>
</dbReference>
<dbReference type="SUPFAM" id="SSF51366">
    <property type="entry name" value="Ribulose-phoshate binding barrel"/>
    <property type="match status" value="1"/>
</dbReference>
<dbReference type="PROSITE" id="PS00167">
    <property type="entry name" value="TRP_SYNTHASE_ALPHA"/>
    <property type="match status" value="1"/>
</dbReference>
<gene>
    <name evidence="1" type="primary">trpA</name>
    <name type="ordered locus">syc1106_d</name>
</gene>
<keyword id="KW-0028">Amino-acid biosynthesis</keyword>
<keyword id="KW-0057">Aromatic amino acid biosynthesis</keyword>
<keyword id="KW-0456">Lyase</keyword>
<keyword id="KW-0822">Tryptophan biosynthesis</keyword>
<accession>Q5N324</accession>
<name>TRPA_SYNP6</name>
<evidence type="ECO:0000255" key="1">
    <source>
        <dbReference type="HAMAP-Rule" id="MF_00131"/>
    </source>
</evidence>
<reference key="1">
    <citation type="journal article" date="2007" name="Photosyn. Res.">
        <title>Complete nucleotide sequence of the freshwater unicellular cyanobacterium Synechococcus elongatus PCC 6301 chromosome: gene content and organization.</title>
        <authorList>
            <person name="Sugita C."/>
            <person name="Ogata K."/>
            <person name="Shikata M."/>
            <person name="Jikuya H."/>
            <person name="Takano J."/>
            <person name="Furumichi M."/>
            <person name="Kanehisa M."/>
            <person name="Omata T."/>
            <person name="Sugiura M."/>
            <person name="Sugita M."/>
        </authorList>
    </citation>
    <scope>NUCLEOTIDE SEQUENCE [LARGE SCALE GENOMIC DNA]</scope>
    <source>
        <strain>ATCC 27144 / PCC 6301 / SAUG 1402/1</strain>
    </source>
</reference>
<feature type="chain" id="PRO_0000098861" description="Tryptophan synthase alpha chain">
    <location>
        <begin position="1"/>
        <end position="266"/>
    </location>
</feature>
<feature type="active site" description="Proton acceptor" evidence="1">
    <location>
        <position position="49"/>
    </location>
</feature>
<feature type="active site" description="Proton acceptor" evidence="1">
    <location>
        <position position="60"/>
    </location>
</feature>
<comment type="function">
    <text evidence="1">The alpha subunit is responsible for the aldol cleavage of indoleglycerol phosphate to indole and glyceraldehyde 3-phosphate.</text>
</comment>
<comment type="catalytic activity">
    <reaction evidence="1">
        <text>(1S,2R)-1-C-(indol-3-yl)glycerol 3-phosphate + L-serine = D-glyceraldehyde 3-phosphate + L-tryptophan + H2O</text>
        <dbReference type="Rhea" id="RHEA:10532"/>
        <dbReference type="ChEBI" id="CHEBI:15377"/>
        <dbReference type="ChEBI" id="CHEBI:33384"/>
        <dbReference type="ChEBI" id="CHEBI:57912"/>
        <dbReference type="ChEBI" id="CHEBI:58866"/>
        <dbReference type="ChEBI" id="CHEBI:59776"/>
        <dbReference type="EC" id="4.2.1.20"/>
    </reaction>
</comment>
<comment type="pathway">
    <text evidence="1">Amino-acid biosynthesis; L-tryptophan biosynthesis; L-tryptophan from chorismate: step 5/5.</text>
</comment>
<comment type="subunit">
    <text evidence="1">Tetramer of two alpha and two beta chains.</text>
</comment>
<comment type="similarity">
    <text evidence="1">Belongs to the TrpA family.</text>
</comment>